<organism>
    <name type="scientific">Flavobacterium johnsoniae (strain ATCC 17061 / DSM 2064 / JCM 8514 / BCRC 14874 / CCUG 350202 / NBRC 14942 / NCIMB 11054 / UW101)</name>
    <name type="common">Cytophaga johnsonae</name>
    <dbReference type="NCBI Taxonomy" id="376686"/>
    <lineage>
        <taxon>Bacteria</taxon>
        <taxon>Pseudomonadati</taxon>
        <taxon>Bacteroidota</taxon>
        <taxon>Flavobacteriia</taxon>
        <taxon>Flavobacteriales</taxon>
        <taxon>Flavobacteriaceae</taxon>
        <taxon>Flavobacterium</taxon>
    </lineage>
</organism>
<sequence>MKRVVVGLSGGVDSSVAAYLLQQQGYEVIGLFMKNWHDDSVTISNECPWLEDSNDALLVAEKLGIPFQTVDLSEEYKEKIVDYMFNEYEKGRTPNPDVLCNREIKFDVFMKIALSLGADYVATGHYCQKSEIEVDGKTVYQLIAGNDVNKDQSYFLCQLSQEQLSKALFPIGALTKPEVREIAAEMELVTAEKKDSQGLCFIGKVRLPEFLQQKLQPKEGTIVQIDKNDPIYNVEKQAGLSLEEELKIESQKLNYRPEMGKVMGKHQGAHYFTVGQRKGLNVGGTTDPLFVIATDVDTNTIYTGLTSNHPGLFKKALFVGNSEVHWVREDLKLKEGEQMEVMARIRYRQPLQKATLHQFANGMYVHFDEPQSAITEGQFVAWYLENELVGSGVIS</sequence>
<accession>A5FHA9</accession>
<name>MNMA_FLAJ1</name>
<gene>
    <name evidence="1" type="primary">mnmA</name>
    <name type="ordered locus">Fjoh_2388</name>
</gene>
<proteinExistence type="inferred from homology"/>
<evidence type="ECO:0000255" key="1">
    <source>
        <dbReference type="HAMAP-Rule" id="MF_00144"/>
    </source>
</evidence>
<dbReference type="EC" id="2.8.1.13" evidence="1"/>
<dbReference type="EMBL" id="CP000685">
    <property type="protein sequence ID" value="ABQ05415.1"/>
    <property type="molecule type" value="Genomic_DNA"/>
</dbReference>
<dbReference type="RefSeq" id="WP_012024454.1">
    <property type="nucleotide sequence ID" value="NC_009441.1"/>
</dbReference>
<dbReference type="SMR" id="A5FHA9"/>
<dbReference type="STRING" id="376686.Fjoh_2388"/>
<dbReference type="KEGG" id="fjo:Fjoh_2388"/>
<dbReference type="eggNOG" id="COG0482">
    <property type="taxonomic scope" value="Bacteria"/>
</dbReference>
<dbReference type="HOGENOM" id="CLU_035188_1_0_10"/>
<dbReference type="OrthoDB" id="9800696at2"/>
<dbReference type="Proteomes" id="UP000006694">
    <property type="component" value="Chromosome"/>
</dbReference>
<dbReference type="GO" id="GO:0005737">
    <property type="term" value="C:cytoplasm"/>
    <property type="evidence" value="ECO:0007669"/>
    <property type="project" value="UniProtKB-SubCell"/>
</dbReference>
<dbReference type="GO" id="GO:0005524">
    <property type="term" value="F:ATP binding"/>
    <property type="evidence" value="ECO:0007669"/>
    <property type="project" value="UniProtKB-KW"/>
</dbReference>
<dbReference type="GO" id="GO:0000049">
    <property type="term" value="F:tRNA binding"/>
    <property type="evidence" value="ECO:0007669"/>
    <property type="project" value="UniProtKB-KW"/>
</dbReference>
<dbReference type="GO" id="GO:0103016">
    <property type="term" value="F:tRNA-uridine 2-sulfurtransferase activity"/>
    <property type="evidence" value="ECO:0007669"/>
    <property type="project" value="UniProtKB-EC"/>
</dbReference>
<dbReference type="GO" id="GO:0002143">
    <property type="term" value="P:tRNA wobble position uridine thiolation"/>
    <property type="evidence" value="ECO:0007669"/>
    <property type="project" value="TreeGrafter"/>
</dbReference>
<dbReference type="CDD" id="cd01998">
    <property type="entry name" value="MnmA_TRMU-like"/>
    <property type="match status" value="1"/>
</dbReference>
<dbReference type="FunFam" id="3.40.50.620:FF:000115">
    <property type="entry name" value="tRNA-specific 2-thiouridylase MnmA"/>
    <property type="match status" value="1"/>
</dbReference>
<dbReference type="Gene3D" id="2.30.30.280">
    <property type="entry name" value="Adenine nucleotide alpha hydrolases-like domains"/>
    <property type="match status" value="1"/>
</dbReference>
<dbReference type="Gene3D" id="3.40.50.620">
    <property type="entry name" value="HUPs"/>
    <property type="match status" value="1"/>
</dbReference>
<dbReference type="Gene3D" id="2.40.30.10">
    <property type="entry name" value="Translation factors"/>
    <property type="match status" value="1"/>
</dbReference>
<dbReference type="HAMAP" id="MF_00144">
    <property type="entry name" value="tRNA_thiouridyl_MnmA"/>
    <property type="match status" value="1"/>
</dbReference>
<dbReference type="InterPro" id="IPR004506">
    <property type="entry name" value="MnmA-like"/>
</dbReference>
<dbReference type="InterPro" id="IPR046885">
    <property type="entry name" value="MnmA-like_C"/>
</dbReference>
<dbReference type="InterPro" id="IPR046884">
    <property type="entry name" value="MnmA-like_central"/>
</dbReference>
<dbReference type="InterPro" id="IPR023382">
    <property type="entry name" value="MnmA-like_central_sf"/>
</dbReference>
<dbReference type="InterPro" id="IPR014729">
    <property type="entry name" value="Rossmann-like_a/b/a_fold"/>
</dbReference>
<dbReference type="NCBIfam" id="NF001138">
    <property type="entry name" value="PRK00143.1"/>
    <property type="match status" value="1"/>
</dbReference>
<dbReference type="NCBIfam" id="TIGR00420">
    <property type="entry name" value="trmU"/>
    <property type="match status" value="1"/>
</dbReference>
<dbReference type="PANTHER" id="PTHR11933:SF5">
    <property type="entry name" value="MITOCHONDRIAL TRNA-SPECIFIC 2-THIOURIDYLASE 1"/>
    <property type="match status" value="1"/>
</dbReference>
<dbReference type="PANTHER" id="PTHR11933">
    <property type="entry name" value="TRNA 5-METHYLAMINOMETHYL-2-THIOURIDYLATE -METHYLTRANSFERASE"/>
    <property type="match status" value="1"/>
</dbReference>
<dbReference type="Pfam" id="PF03054">
    <property type="entry name" value="tRNA_Me_trans"/>
    <property type="match status" value="1"/>
</dbReference>
<dbReference type="Pfam" id="PF20258">
    <property type="entry name" value="tRNA_Me_trans_C"/>
    <property type="match status" value="1"/>
</dbReference>
<dbReference type="Pfam" id="PF20259">
    <property type="entry name" value="tRNA_Me_trans_M"/>
    <property type="match status" value="1"/>
</dbReference>
<dbReference type="SUPFAM" id="SSF52402">
    <property type="entry name" value="Adenine nucleotide alpha hydrolases-like"/>
    <property type="match status" value="1"/>
</dbReference>
<keyword id="KW-0067">ATP-binding</keyword>
<keyword id="KW-0963">Cytoplasm</keyword>
<keyword id="KW-1015">Disulfide bond</keyword>
<keyword id="KW-0547">Nucleotide-binding</keyword>
<keyword id="KW-0694">RNA-binding</keyword>
<keyword id="KW-0808">Transferase</keyword>
<keyword id="KW-0819">tRNA processing</keyword>
<keyword id="KW-0820">tRNA-binding</keyword>
<feature type="chain" id="PRO_0000349637" description="tRNA-specific 2-thiouridylase MnmA">
    <location>
        <begin position="1"/>
        <end position="395"/>
    </location>
</feature>
<feature type="region of interest" description="Interaction with target base in tRNA" evidence="1">
    <location>
        <begin position="95"/>
        <end position="97"/>
    </location>
</feature>
<feature type="region of interest" description="Interaction with tRNA" evidence="1">
    <location>
        <begin position="150"/>
        <end position="152"/>
    </location>
</feature>
<feature type="region of interest" description="Interaction with tRNA" evidence="1">
    <location>
        <begin position="346"/>
        <end position="347"/>
    </location>
</feature>
<feature type="active site" description="Nucleophile" evidence="1">
    <location>
        <position position="100"/>
    </location>
</feature>
<feature type="active site" description="Cysteine persulfide intermediate" evidence="1">
    <location>
        <position position="200"/>
    </location>
</feature>
<feature type="binding site" evidence="1">
    <location>
        <begin position="7"/>
        <end position="14"/>
    </location>
    <ligand>
        <name>ATP</name>
        <dbReference type="ChEBI" id="CHEBI:30616"/>
    </ligand>
</feature>
<feature type="binding site" evidence="1">
    <location>
        <position position="33"/>
    </location>
    <ligand>
        <name>ATP</name>
        <dbReference type="ChEBI" id="CHEBI:30616"/>
    </ligand>
</feature>
<feature type="binding site" evidence="1">
    <location>
        <position position="124"/>
    </location>
    <ligand>
        <name>ATP</name>
        <dbReference type="ChEBI" id="CHEBI:30616"/>
    </ligand>
</feature>
<feature type="site" description="Interaction with tRNA" evidence="1">
    <location>
        <position position="125"/>
    </location>
</feature>
<feature type="site" description="Interaction with tRNA" evidence="1">
    <location>
        <position position="378"/>
    </location>
</feature>
<feature type="disulfide bond" description="Alternate" evidence="1">
    <location>
        <begin position="100"/>
        <end position="200"/>
    </location>
</feature>
<comment type="function">
    <text evidence="1">Catalyzes the 2-thiolation of uridine at the wobble position (U34) of tRNA, leading to the formation of s(2)U34.</text>
</comment>
<comment type="catalytic activity">
    <reaction evidence="1">
        <text>S-sulfanyl-L-cysteinyl-[protein] + uridine(34) in tRNA + AH2 + ATP = 2-thiouridine(34) in tRNA + L-cysteinyl-[protein] + A + AMP + diphosphate + H(+)</text>
        <dbReference type="Rhea" id="RHEA:47032"/>
        <dbReference type="Rhea" id="RHEA-COMP:10131"/>
        <dbReference type="Rhea" id="RHEA-COMP:11726"/>
        <dbReference type="Rhea" id="RHEA-COMP:11727"/>
        <dbReference type="Rhea" id="RHEA-COMP:11728"/>
        <dbReference type="ChEBI" id="CHEBI:13193"/>
        <dbReference type="ChEBI" id="CHEBI:15378"/>
        <dbReference type="ChEBI" id="CHEBI:17499"/>
        <dbReference type="ChEBI" id="CHEBI:29950"/>
        <dbReference type="ChEBI" id="CHEBI:30616"/>
        <dbReference type="ChEBI" id="CHEBI:33019"/>
        <dbReference type="ChEBI" id="CHEBI:61963"/>
        <dbReference type="ChEBI" id="CHEBI:65315"/>
        <dbReference type="ChEBI" id="CHEBI:87170"/>
        <dbReference type="ChEBI" id="CHEBI:456215"/>
        <dbReference type="EC" id="2.8.1.13"/>
    </reaction>
</comment>
<comment type="subcellular location">
    <subcellularLocation>
        <location evidence="1">Cytoplasm</location>
    </subcellularLocation>
</comment>
<comment type="similarity">
    <text evidence="1">Belongs to the MnmA/TRMU family.</text>
</comment>
<reference key="1">
    <citation type="journal article" date="2009" name="Appl. Environ. Microbiol.">
        <title>Novel features of the polysaccharide-digesting gliding bacterium Flavobacterium johnsoniae as revealed by genome sequence analysis.</title>
        <authorList>
            <person name="McBride M.J."/>
            <person name="Xie G."/>
            <person name="Martens E.C."/>
            <person name="Lapidus A."/>
            <person name="Henrissat B."/>
            <person name="Rhodes R.G."/>
            <person name="Goltsman E."/>
            <person name="Wang W."/>
            <person name="Xu J."/>
            <person name="Hunnicutt D.W."/>
            <person name="Staroscik A.M."/>
            <person name="Hoover T.R."/>
            <person name="Cheng Y.Q."/>
            <person name="Stein J.L."/>
        </authorList>
    </citation>
    <scope>NUCLEOTIDE SEQUENCE [LARGE SCALE GENOMIC DNA]</scope>
    <source>
        <strain>ATCC 17061 / DSM 2064 / JCM 8514 / BCRC 14874 / CCUG 350202 / NBRC 14942 / NCIMB 11054 / UW101</strain>
    </source>
</reference>
<protein>
    <recommendedName>
        <fullName evidence="1">tRNA-specific 2-thiouridylase MnmA</fullName>
        <ecNumber evidence="1">2.8.1.13</ecNumber>
    </recommendedName>
</protein>